<sequence>MAVGLCVQVLCSLGGWLSLYTSFCCLNKHRSCEWSCRLVTFTHGVLSIGLSAYIGFIDGPWPFTHPGSPNTPLQVHVLCLTLGYFIFDLGWCIYFQSEGPLMLAHHTLSILGIIMALALGESGTEVNAVLFGSEITNPLLQMRWFLRETGHYHSFTGDVVDFLFVALFTGVRIGVGAHLLFCEMVSPTPKWFVKVGGVAMYAVSWCFMVSIWRFAWKKSIKKYHAWRSRRNEERQLRHNGHLKTH</sequence>
<feature type="chain" id="PRO_0000285584" description="TLC domain-containing protein 5">
    <location>
        <begin position="1"/>
        <end position="245"/>
    </location>
</feature>
<feature type="transmembrane region" description="Helical" evidence="1">
    <location>
        <begin position="1"/>
        <end position="21"/>
    </location>
</feature>
<feature type="transmembrane region" description="Helical" evidence="1">
    <location>
        <begin position="38"/>
        <end position="58"/>
    </location>
</feature>
<feature type="transmembrane region" description="Helical" evidence="1">
    <location>
        <begin position="75"/>
        <end position="95"/>
    </location>
</feature>
<feature type="transmembrane region" description="Helical" evidence="1">
    <location>
        <begin position="99"/>
        <end position="119"/>
    </location>
</feature>
<feature type="transmembrane region" description="Helical" evidence="1">
    <location>
        <begin position="162"/>
        <end position="182"/>
    </location>
</feature>
<feature type="transmembrane region" description="Helical" evidence="1">
    <location>
        <begin position="191"/>
        <end position="211"/>
    </location>
</feature>
<feature type="domain" description="TLC" evidence="2">
    <location>
        <begin position="29"/>
        <end position="204"/>
    </location>
</feature>
<name>TLCD5_MOUSE</name>
<evidence type="ECO:0000255" key="1"/>
<evidence type="ECO:0000255" key="2">
    <source>
        <dbReference type="PROSITE-ProRule" id="PRU00205"/>
    </source>
</evidence>
<evidence type="ECO:0000305" key="3"/>
<reference key="1">
    <citation type="journal article" date="2005" name="Science">
        <title>The transcriptional landscape of the mammalian genome.</title>
        <authorList>
            <person name="Carninci P."/>
            <person name="Kasukawa T."/>
            <person name="Katayama S."/>
            <person name="Gough J."/>
            <person name="Frith M.C."/>
            <person name="Maeda N."/>
            <person name="Oyama R."/>
            <person name="Ravasi T."/>
            <person name="Lenhard B."/>
            <person name="Wells C."/>
            <person name="Kodzius R."/>
            <person name="Shimokawa K."/>
            <person name="Bajic V.B."/>
            <person name="Brenner S.E."/>
            <person name="Batalov S."/>
            <person name="Forrest A.R."/>
            <person name="Zavolan M."/>
            <person name="Davis M.J."/>
            <person name="Wilming L.G."/>
            <person name="Aidinis V."/>
            <person name="Allen J.E."/>
            <person name="Ambesi-Impiombato A."/>
            <person name="Apweiler R."/>
            <person name="Aturaliya R.N."/>
            <person name="Bailey T.L."/>
            <person name="Bansal M."/>
            <person name="Baxter L."/>
            <person name="Beisel K.W."/>
            <person name="Bersano T."/>
            <person name="Bono H."/>
            <person name="Chalk A.M."/>
            <person name="Chiu K.P."/>
            <person name="Choudhary V."/>
            <person name="Christoffels A."/>
            <person name="Clutterbuck D.R."/>
            <person name="Crowe M.L."/>
            <person name="Dalla E."/>
            <person name="Dalrymple B.P."/>
            <person name="de Bono B."/>
            <person name="Della Gatta G."/>
            <person name="di Bernardo D."/>
            <person name="Down T."/>
            <person name="Engstrom P."/>
            <person name="Fagiolini M."/>
            <person name="Faulkner G."/>
            <person name="Fletcher C.F."/>
            <person name="Fukushima T."/>
            <person name="Furuno M."/>
            <person name="Futaki S."/>
            <person name="Gariboldi M."/>
            <person name="Georgii-Hemming P."/>
            <person name="Gingeras T.R."/>
            <person name="Gojobori T."/>
            <person name="Green R.E."/>
            <person name="Gustincich S."/>
            <person name="Harbers M."/>
            <person name="Hayashi Y."/>
            <person name="Hensch T.K."/>
            <person name="Hirokawa N."/>
            <person name="Hill D."/>
            <person name="Huminiecki L."/>
            <person name="Iacono M."/>
            <person name="Ikeo K."/>
            <person name="Iwama A."/>
            <person name="Ishikawa T."/>
            <person name="Jakt M."/>
            <person name="Kanapin A."/>
            <person name="Katoh M."/>
            <person name="Kawasawa Y."/>
            <person name="Kelso J."/>
            <person name="Kitamura H."/>
            <person name="Kitano H."/>
            <person name="Kollias G."/>
            <person name="Krishnan S.P."/>
            <person name="Kruger A."/>
            <person name="Kummerfeld S.K."/>
            <person name="Kurochkin I.V."/>
            <person name="Lareau L.F."/>
            <person name="Lazarevic D."/>
            <person name="Lipovich L."/>
            <person name="Liu J."/>
            <person name="Liuni S."/>
            <person name="McWilliam S."/>
            <person name="Madan Babu M."/>
            <person name="Madera M."/>
            <person name="Marchionni L."/>
            <person name="Matsuda H."/>
            <person name="Matsuzawa S."/>
            <person name="Miki H."/>
            <person name="Mignone F."/>
            <person name="Miyake S."/>
            <person name="Morris K."/>
            <person name="Mottagui-Tabar S."/>
            <person name="Mulder N."/>
            <person name="Nakano N."/>
            <person name="Nakauchi H."/>
            <person name="Ng P."/>
            <person name="Nilsson R."/>
            <person name="Nishiguchi S."/>
            <person name="Nishikawa S."/>
            <person name="Nori F."/>
            <person name="Ohara O."/>
            <person name="Okazaki Y."/>
            <person name="Orlando V."/>
            <person name="Pang K.C."/>
            <person name="Pavan W.J."/>
            <person name="Pavesi G."/>
            <person name="Pesole G."/>
            <person name="Petrovsky N."/>
            <person name="Piazza S."/>
            <person name="Reed J."/>
            <person name="Reid J.F."/>
            <person name="Ring B.Z."/>
            <person name="Ringwald M."/>
            <person name="Rost B."/>
            <person name="Ruan Y."/>
            <person name="Salzberg S.L."/>
            <person name="Sandelin A."/>
            <person name="Schneider C."/>
            <person name="Schoenbach C."/>
            <person name="Sekiguchi K."/>
            <person name="Semple C.A."/>
            <person name="Seno S."/>
            <person name="Sessa L."/>
            <person name="Sheng Y."/>
            <person name="Shibata Y."/>
            <person name="Shimada H."/>
            <person name="Shimada K."/>
            <person name="Silva D."/>
            <person name="Sinclair B."/>
            <person name="Sperling S."/>
            <person name="Stupka E."/>
            <person name="Sugiura K."/>
            <person name="Sultana R."/>
            <person name="Takenaka Y."/>
            <person name="Taki K."/>
            <person name="Tammoja K."/>
            <person name="Tan S.L."/>
            <person name="Tang S."/>
            <person name="Taylor M.S."/>
            <person name="Tegner J."/>
            <person name="Teichmann S.A."/>
            <person name="Ueda H.R."/>
            <person name="van Nimwegen E."/>
            <person name="Verardo R."/>
            <person name="Wei C.L."/>
            <person name="Yagi K."/>
            <person name="Yamanishi H."/>
            <person name="Zabarovsky E."/>
            <person name="Zhu S."/>
            <person name="Zimmer A."/>
            <person name="Hide W."/>
            <person name="Bult C."/>
            <person name="Grimmond S.M."/>
            <person name="Teasdale R.D."/>
            <person name="Liu E.T."/>
            <person name="Brusic V."/>
            <person name="Quackenbush J."/>
            <person name="Wahlestedt C."/>
            <person name="Mattick J.S."/>
            <person name="Hume D.A."/>
            <person name="Kai C."/>
            <person name="Sasaki D."/>
            <person name="Tomaru Y."/>
            <person name="Fukuda S."/>
            <person name="Kanamori-Katayama M."/>
            <person name="Suzuki M."/>
            <person name="Aoki J."/>
            <person name="Arakawa T."/>
            <person name="Iida J."/>
            <person name="Imamura K."/>
            <person name="Itoh M."/>
            <person name="Kato T."/>
            <person name="Kawaji H."/>
            <person name="Kawagashira N."/>
            <person name="Kawashima T."/>
            <person name="Kojima M."/>
            <person name="Kondo S."/>
            <person name="Konno H."/>
            <person name="Nakano K."/>
            <person name="Ninomiya N."/>
            <person name="Nishio T."/>
            <person name="Okada M."/>
            <person name="Plessy C."/>
            <person name="Shibata K."/>
            <person name="Shiraki T."/>
            <person name="Suzuki S."/>
            <person name="Tagami M."/>
            <person name="Waki K."/>
            <person name="Watahiki A."/>
            <person name="Okamura-Oho Y."/>
            <person name="Suzuki H."/>
            <person name="Kawai J."/>
            <person name="Hayashizaki Y."/>
        </authorList>
    </citation>
    <scope>NUCLEOTIDE SEQUENCE [LARGE SCALE MRNA]</scope>
    <source>
        <strain>C57BL/6J</strain>
        <tissue>Visual cortex</tissue>
    </source>
</reference>
<reference key="2">
    <citation type="journal article" date="2004" name="Genome Res.">
        <title>The status, quality, and expansion of the NIH full-length cDNA project: the Mammalian Gene Collection (MGC).</title>
        <authorList>
            <consortium name="The MGC Project Team"/>
        </authorList>
    </citation>
    <scope>NUCLEOTIDE SEQUENCE [LARGE SCALE MRNA]</scope>
    <source>
        <tissue>Brain</tissue>
    </source>
</reference>
<accession>Q3TYE7</accession>
<accession>B9EI43</accession>
<comment type="subcellular location">
    <subcellularLocation>
        <location evidence="3">Membrane</location>
        <topology evidence="3">Multi-pass membrane protein</topology>
    </subcellularLocation>
</comment>
<comment type="similarity">
    <text evidence="3">Belongs to the TLCD5 family.</text>
</comment>
<protein>
    <recommendedName>
        <fullName evidence="3">TLC domain-containing protein 5</fullName>
    </recommendedName>
    <alternativeName>
        <fullName>Transmembrane protein 136</fullName>
    </alternativeName>
</protein>
<keyword id="KW-0472">Membrane</keyword>
<keyword id="KW-1185">Reference proteome</keyword>
<keyword id="KW-0812">Transmembrane</keyword>
<keyword id="KW-1133">Transmembrane helix</keyword>
<dbReference type="EMBL" id="AK158698">
    <property type="protein sequence ID" value="BAE34616.1"/>
    <property type="molecule type" value="mRNA"/>
</dbReference>
<dbReference type="EMBL" id="BC139047">
    <property type="protein sequence ID" value="AAI39048.1"/>
    <property type="molecule type" value="mRNA"/>
</dbReference>
<dbReference type="CCDS" id="CCDS23090.1"/>
<dbReference type="RefSeq" id="NP_001030035.1">
    <property type="nucleotide sequence ID" value="NM_001034863.3"/>
</dbReference>
<dbReference type="RefSeq" id="XP_006510319.1">
    <property type="nucleotide sequence ID" value="XM_006510256.1"/>
</dbReference>
<dbReference type="FunCoup" id="Q3TYE7">
    <property type="interactions" value="5"/>
</dbReference>
<dbReference type="STRING" id="10090.ENSMUSP00000051435"/>
<dbReference type="GlyGen" id="Q3TYE7">
    <property type="glycosylation" value="1 site"/>
</dbReference>
<dbReference type="PaxDb" id="10090-ENSMUSP00000051435"/>
<dbReference type="Antibodypedia" id="71703">
    <property type="antibodies" value="17 antibodies from 9 providers"/>
</dbReference>
<dbReference type="Ensembl" id="ENSMUST00000061833.6">
    <property type="protein sequence ID" value="ENSMUSP00000051435.5"/>
    <property type="gene ID" value="ENSMUSG00000048503.8"/>
</dbReference>
<dbReference type="Ensembl" id="ENSMUST00000213544.2">
    <property type="protein sequence ID" value="ENSMUSP00000150692.2"/>
    <property type="gene ID" value="ENSMUSG00000048503.8"/>
</dbReference>
<dbReference type="GeneID" id="235300"/>
<dbReference type="KEGG" id="mmu:235300"/>
<dbReference type="UCSC" id="uc009pbd.1">
    <property type="organism name" value="mouse"/>
</dbReference>
<dbReference type="AGR" id="MGI:2685030"/>
<dbReference type="CTD" id="219902"/>
<dbReference type="MGI" id="MGI:2685030">
    <property type="gene designation" value="Tlcd5"/>
</dbReference>
<dbReference type="VEuPathDB" id="HostDB:ENSMUSG00000048503"/>
<dbReference type="eggNOG" id="KOG4474">
    <property type="taxonomic scope" value="Eukaryota"/>
</dbReference>
<dbReference type="GeneTree" id="ENSGT00390000008162"/>
<dbReference type="HOGENOM" id="CLU_083447_0_0_1"/>
<dbReference type="InParanoid" id="Q3TYE7"/>
<dbReference type="OMA" id="CEMASPK"/>
<dbReference type="OrthoDB" id="506011at2759"/>
<dbReference type="PhylomeDB" id="Q3TYE7"/>
<dbReference type="TreeFam" id="TF329126"/>
<dbReference type="BioGRID-ORCS" id="235300">
    <property type="hits" value="1 hit in 78 CRISPR screens"/>
</dbReference>
<dbReference type="ChiTaRS" id="Tmem136">
    <property type="organism name" value="mouse"/>
</dbReference>
<dbReference type="PRO" id="PR:Q3TYE7"/>
<dbReference type="Proteomes" id="UP000000589">
    <property type="component" value="Chromosome 9"/>
</dbReference>
<dbReference type="RNAct" id="Q3TYE7">
    <property type="molecule type" value="protein"/>
</dbReference>
<dbReference type="Bgee" id="ENSMUSG00000048503">
    <property type="expression patterns" value="Expressed in pigmented layer of retina and 195 other cell types or tissues"/>
</dbReference>
<dbReference type="ExpressionAtlas" id="Q3TYE7">
    <property type="expression patterns" value="baseline and differential"/>
</dbReference>
<dbReference type="GO" id="GO:0016020">
    <property type="term" value="C:membrane"/>
    <property type="evidence" value="ECO:0007669"/>
    <property type="project" value="UniProtKB-SubCell"/>
</dbReference>
<dbReference type="InterPro" id="IPR006634">
    <property type="entry name" value="TLC-dom"/>
</dbReference>
<dbReference type="InterPro" id="IPR042512">
    <property type="entry name" value="TLCD5"/>
</dbReference>
<dbReference type="PANTHER" id="PTHR31898:SF1">
    <property type="entry name" value="TLC DOMAIN-CONTAINING PROTEIN 5"/>
    <property type="match status" value="1"/>
</dbReference>
<dbReference type="PANTHER" id="PTHR31898">
    <property type="entry name" value="TRANSMEMBRANE PROTEIN 136"/>
    <property type="match status" value="1"/>
</dbReference>
<dbReference type="Pfam" id="PF03798">
    <property type="entry name" value="TRAM_LAG1_CLN8"/>
    <property type="match status" value="1"/>
</dbReference>
<dbReference type="SMART" id="SM00724">
    <property type="entry name" value="TLC"/>
    <property type="match status" value="1"/>
</dbReference>
<dbReference type="PROSITE" id="PS50922">
    <property type="entry name" value="TLC"/>
    <property type="match status" value="1"/>
</dbReference>
<proteinExistence type="evidence at transcript level"/>
<gene>
    <name type="primary">Tlcd5</name>
    <name type="synonym">Gm184</name>
    <name type="synonym">Tmem136</name>
</gene>
<organism>
    <name type="scientific">Mus musculus</name>
    <name type="common">Mouse</name>
    <dbReference type="NCBI Taxonomy" id="10090"/>
    <lineage>
        <taxon>Eukaryota</taxon>
        <taxon>Metazoa</taxon>
        <taxon>Chordata</taxon>
        <taxon>Craniata</taxon>
        <taxon>Vertebrata</taxon>
        <taxon>Euteleostomi</taxon>
        <taxon>Mammalia</taxon>
        <taxon>Eutheria</taxon>
        <taxon>Euarchontoglires</taxon>
        <taxon>Glires</taxon>
        <taxon>Rodentia</taxon>
        <taxon>Myomorpha</taxon>
        <taxon>Muroidea</taxon>
        <taxon>Muridae</taxon>
        <taxon>Murinae</taxon>
        <taxon>Mus</taxon>
        <taxon>Mus</taxon>
    </lineage>
</organism>